<evidence type="ECO:0000250" key="1">
    <source>
        <dbReference type="UniProtKB" id="E9RAH5"/>
    </source>
</evidence>
<evidence type="ECO:0000269" key="2">
    <source>
    </source>
</evidence>
<evidence type="ECO:0000303" key="3">
    <source>
    </source>
</evidence>
<evidence type="ECO:0000305" key="4"/>
<evidence type="ECO:0000305" key="5">
    <source>
    </source>
</evidence>
<proteinExistence type="inferred from homology"/>
<protein>
    <recommendedName>
        <fullName evidence="3">Thioredoxin reductase FGSG_00043</fullName>
        <ecNumber evidence="5">1.8.1.-</ecNumber>
    </recommendedName>
    <alternativeName>
        <fullName evidence="3">Gramillins biosynthetic cluster protein FGSG_00043</fullName>
    </alternativeName>
</protein>
<comment type="function">
    <text evidence="2 5">Thioredoxin reductase; part of the gene cluster that mediates the biosynthesis of gramillins A and B, bicyclic lipopeptides that induce cell death in maize leaves but not in wheat leaves (PubMed:30395461). The nonribosomal peptide synthetase GRA1 incorporates respectively a glutamic adic (Glu), a leucine (Leu), a serine (Ser), a hydroxyglutamine (HOGln), a 2-amino decanoic acid, and 2 cysteins (CysB and CysA) (Probable). The biosynthesis of 2-amino decanoic acid incorporated in gramillins could be initiated by a fatty acid synthase composed of the alpha and beta subunits FGSG_00036 and FGSG_11656 (Probable). The cytochrome P450 monooxygenase FGSG_15680 could hydroxylate the fatty acid chain (Probable). Subsequent oxidation to the ketone by the oxidoreductase FGSG_00048 and transamination by aminotransferase FGSG_00049 could form 2-amino-decanoic acid (Probable). On the other hand, FGSG_15680 could also be responsible for the HO-modified glutamine at the gamma-position (Probable). Whether hydroxylation occurs on the fully assembled product or on the Gln residue prior to assembly into the gramillins requires further proof (Probable). The thioredoxin FGSG_00043 could also be required for the disulfide-bond formation between CysA and CysB (Probable). The specific involvement of the remaining proteins from the cluster is more difficult to discern, but could have broader regulatory (FGSG_00040 and FGSG_11657) or enzymatic functions (FGSG_00044 and FGSG_00045) (Probable). The final C-domain of GRA1 does not possess the expected sequence of a termination CT domain, often implicated in macrocyclization and release of a cyclopeptidein fungal NRPs; and the thioesterase FGSG_00047 may act in concert with the terminal C-domain of GRA1 to catalyze the formation of the macrocyclic anhydride and release of the products (Probable).</text>
</comment>
<comment type="cofactor">
    <cofactor evidence="1">
        <name>FAD</name>
        <dbReference type="ChEBI" id="CHEBI:57692"/>
    </cofactor>
    <text evidence="1">Binds 1 FAD per subunit.</text>
</comment>
<comment type="pathway">
    <text evidence="5">Mycotoxin biosynthesis.</text>
</comment>
<comment type="subunit">
    <text evidence="1">Homodimer.</text>
</comment>
<comment type="similarity">
    <text evidence="4">Belongs to the class-II pyridine nucleotide-disulfide oxidoreductase family.</text>
</comment>
<sequence>MSQIIDALVIGGGPAGLGAALGLCRQNHSVVLLDSVSYRNTIDTIPDNRMHMVATWDHRRPDEFRVAARKELQRYERFKYREVEVVSVRQTTSTQSGKLEALFNAKAADGTEYAARKLILATGVKDVFPKIEGFSECWAKGMYVLSPNSNELCIARETKYRSFHCLFCHGYEDRNSESVGVLAVGECAETSTVARMARAAHQFSRSITIYTNGNSELGDQVYRLLGKEGWCSINNLGIKKVYMPQKTPASPITVQVELSDGTTKTEDFLVHKPATVQASALYTQLGLQLTAEGDIKVKEPMFETSKAGVFAVGDCASPNKFVSSASTSGGFAAAGAAMQLQAGF</sequence>
<feature type="chain" id="PRO_0000450565" description="Thioredoxin reductase FGSG_00043">
    <location>
        <begin position="1"/>
        <end position="344"/>
    </location>
</feature>
<feature type="binding site" evidence="1">
    <location>
        <begin position="12"/>
        <end position="15"/>
    </location>
    <ligand>
        <name>FAD</name>
        <dbReference type="ChEBI" id="CHEBI:57692"/>
    </ligand>
</feature>
<feature type="binding site" evidence="1">
    <location>
        <begin position="34"/>
        <end position="39"/>
    </location>
    <ligand>
        <name>FAD</name>
        <dbReference type="ChEBI" id="CHEBI:57692"/>
    </ligand>
</feature>
<feature type="binding site" evidence="1">
    <location>
        <position position="51"/>
    </location>
    <ligand>
        <name>FAD</name>
        <dbReference type="ChEBI" id="CHEBI:57692"/>
    </ligand>
</feature>
<feature type="binding site" evidence="1">
    <location>
        <position position="121"/>
    </location>
    <ligand>
        <name>FAD</name>
        <dbReference type="ChEBI" id="CHEBI:57692"/>
    </ligand>
</feature>
<feature type="binding site" evidence="1">
    <location>
        <position position="314"/>
    </location>
    <ligand>
        <name>FAD</name>
        <dbReference type="ChEBI" id="CHEBI:57692"/>
    </ligand>
</feature>
<feature type="binding site" evidence="1">
    <location>
        <begin position="321"/>
        <end position="322"/>
    </location>
    <ligand>
        <name>FAD</name>
        <dbReference type="ChEBI" id="CHEBI:57692"/>
    </ligand>
</feature>
<feature type="disulfide bond" description="Redox-active" evidence="1">
    <location>
        <begin position="165"/>
        <end position="168"/>
    </location>
</feature>
<dbReference type="EC" id="1.8.1.-" evidence="5"/>
<dbReference type="EMBL" id="HG970332">
    <property type="protein sequence ID" value="CEF71872.1"/>
    <property type="molecule type" value="Genomic_DNA"/>
</dbReference>
<dbReference type="RefSeq" id="XP_011315632.1">
    <property type="nucleotide sequence ID" value="XM_011317330.1"/>
</dbReference>
<dbReference type="SMR" id="I1R9B0"/>
<dbReference type="STRING" id="229533.I1R9B0"/>
<dbReference type="GeneID" id="23547559"/>
<dbReference type="KEGG" id="fgr:FGSG_00043"/>
<dbReference type="VEuPathDB" id="FungiDB:FGRAMPH1_01G00145"/>
<dbReference type="eggNOG" id="ENOG502S1DJ">
    <property type="taxonomic scope" value="Eukaryota"/>
</dbReference>
<dbReference type="HOGENOM" id="CLU_031864_5_0_1"/>
<dbReference type="InParanoid" id="I1R9B0"/>
<dbReference type="OrthoDB" id="94512at110618"/>
<dbReference type="Proteomes" id="UP000070720">
    <property type="component" value="Chromosome 1"/>
</dbReference>
<dbReference type="GO" id="GO:0016491">
    <property type="term" value="F:oxidoreductase activity"/>
    <property type="evidence" value="ECO:0007669"/>
    <property type="project" value="UniProtKB-KW"/>
</dbReference>
<dbReference type="GO" id="GO:0097237">
    <property type="term" value="P:cellular response to toxic substance"/>
    <property type="evidence" value="ECO:0007669"/>
    <property type="project" value="UniProtKB-ARBA"/>
</dbReference>
<dbReference type="Gene3D" id="3.50.50.60">
    <property type="entry name" value="FAD/NAD(P)-binding domain"/>
    <property type="match status" value="2"/>
</dbReference>
<dbReference type="InterPro" id="IPR036188">
    <property type="entry name" value="FAD/NAD-bd_sf"/>
</dbReference>
<dbReference type="InterPro" id="IPR023753">
    <property type="entry name" value="FAD/NAD-binding_dom"/>
</dbReference>
<dbReference type="InterPro" id="IPR050097">
    <property type="entry name" value="Ferredoxin-NADP_redctase_2"/>
</dbReference>
<dbReference type="PANTHER" id="PTHR48105">
    <property type="entry name" value="THIOREDOXIN REDUCTASE 1-RELATED-RELATED"/>
    <property type="match status" value="1"/>
</dbReference>
<dbReference type="Pfam" id="PF07992">
    <property type="entry name" value="Pyr_redox_2"/>
    <property type="match status" value="1"/>
</dbReference>
<dbReference type="PRINTS" id="PR00368">
    <property type="entry name" value="FADPNR"/>
</dbReference>
<dbReference type="PRINTS" id="PR00469">
    <property type="entry name" value="PNDRDTASEII"/>
</dbReference>
<dbReference type="SUPFAM" id="SSF51905">
    <property type="entry name" value="FAD/NAD(P)-binding domain"/>
    <property type="match status" value="1"/>
</dbReference>
<organism>
    <name type="scientific">Gibberella zeae (strain ATCC MYA-4620 / CBS 123657 / FGSC 9075 / NRRL 31084 / PH-1)</name>
    <name type="common">Wheat head blight fungus</name>
    <name type="synonym">Fusarium graminearum</name>
    <dbReference type="NCBI Taxonomy" id="229533"/>
    <lineage>
        <taxon>Eukaryota</taxon>
        <taxon>Fungi</taxon>
        <taxon>Dikarya</taxon>
        <taxon>Ascomycota</taxon>
        <taxon>Pezizomycotina</taxon>
        <taxon>Sordariomycetes</taxon>
        <taxon>Hypocreomycetidae</taxon>
        <taxon>Hypocreales</taxon>
        <taxon>Nectriaceae</taxon>
        <taxon>Fusarium</taxon>
    </lineage>
</organism>
<name>GRA10_GIBZE</name>
<accession>I1R9B0</accession>
<accession>A0A098D0A5</accession>
<keyword id="KW-1015">Disulfide bond</keyword>
<keyword id="KW-0274">FAD</keyword>
<keyword id="KW-0285">Flavoprotein</keyword>
<keyword id="KW-0521">NADP</keyword>
<keyword id="KW-0560">Oxidoreductase</keyword>
<keyword id="KW-0676">Redox-active center</keyword>
<keyword id="KW-1185">Reference proteome</keyword>
<keyword id="KW-0843">Virulence</keyword>
<gene>
    <name type="ORF">FG00043</name>
    <name type="ORF">FGRAMPH1_01T00145</name>
    <name type="ORF">FGSG_00043</name>
</gene>
<reference key="1">
    <citation type="journal article" date="2007" name="Science">
        <title>The Fusarium graminearum genome reveals a link between localized polymorphism and pathogen specialization.</title>
        <authorList>
            <person name="Cuomo C.A."/>
            <person name="Gueldener U."/>
            <person name="Xu J.-R."/>
            <person name="Trail F."/>
            <person name="Turgeon B.G."/>
            <person name="Di Pietro A."/>
            <person name="Walton J.D."/>
            <person name="Ma L.-J."/>
            <person name="Baker S.E."/>
            <person name="Rep M."/>
            <person name="Adam G."/>
            <person name="Antoniw J."/>
            <person name="Baldwin T."/>
            <person name="Calvo S.E."/>
            <person name="Chang Y.-L."/>
            <person name="DeCaprio D."/>
            <person name="Gale L.R."/>
            <person name="Gnerre S."/>
            <person name="Goswami R.S."/>
            <person name="Hammond-Kosack K."/>
            <person name="Harris L.J."/>
            <person name="Hilburn K."/>
            <person name="Kennell J.C."/>
            <person name="Kroken S."/>
            <person name="Magnuson J.K."/>
            <person name="Mannhaupt G."/>
            <person name="Mauceli E.W."/>
            <person name="Mewes H.-W."/>
            <person name="Mitterbauer R."/>
            <person name="Muehlbauer G."/>
            <person name="Muensterkoetter M."/>
            <person name="Nelson D."/>
            <person name="O'Donnell K."/>
            <person name="Ouellet T."/>
            <person name="Qi W."/>
            <person name="Quesneville H."/>
            <person name="Roncero M.I.G."/>
            <person name="Seong K.-Y."/>
            <person name="Tetko I.V."/>
            <person name="Urban M."/>
            <person name="Waalwijk C."/>
            <person name="Ward T.J."/>
            <person name="Yao J."/>
            <person name="Birren B.W."/>
            <person name="Kistler H.C."/>
        </authorList>
    </citation>
    <scope>NUCLEOTIDE SEQUENCE [LARGE SCALE GENOMIC DNA]</scope>
    <source>
        <strain>ATCC MYA-4620 / CBS 123657 / FGSC 9075 / NRRL 31084 / PH-1</strain>
    </source>
</reference>
<reference key="2">
    <citation type="journal article" date="2010" name="Nature">
        <title>Comparative genomics reveals mobile pathogenicity chromosomes in Fusarium.</title>
        <authorList>
            <person name="Ma L.-J."/>
            <person name="van der Does H.C."/>
            <person name="Borkovich K.A."/>
            <person name="Coleman J.J."/>
            <person name="Daboussi M.-J."/>
            <person name="Di Pietro A."/>
            <person name="Dufresne M."/>
            <person name="Freitag M."/>
            <person name="Grabherr M."/>
            <person name="Henrissat B."/>
            <person name="Houterman P.M."/>
            <person name="Kang S."/>
            <person name="Shim W.-B."/>
            <person name="Woloshuk C."/>
            <person name="Xie X."/>
            <person name="Xu J.-R."/>
            <person name="Antoniw J."/>
            <person name="Baker S.E."/>
            <person name="Bluhm B.H."/>
            <person name="Breakspear A."/>
            <person name="Brown D.W."/>
            <person name="Butchko R.A.E."/>
            <person name="Chapman S."/>
            <person name="Coulson R."/>
            <person name="Coutinho P.M."/>
            <person name="Danchin E.G.J."/>
            <person name="Diener A."/>
            <person name="Gale L.R."/>
            <person name="Gardiner D.M."/>
            <person name="Goff S."/>
            <person name="Hammond-Kosack K.E."/>
            <person name="Hilburn K."/>
            <person name="Hua-Van A."/>
            <person name="Jonkers W."/>
            <person name="Kazan K."/>
            <person name="Kodira C.D."/>
            <person name="Koehrsen M."/>
            <person name="Kumar L."/>
            <person name="Lee Y.-H."/>
            <person name="Li L."/>
            <person name="Manners J.M."/>
            <person name="Miranda-Saavedra D."/>
            <person name="Mukherjee M."/>
            <person name="Park G."/>
            <person name="Park J."/>
            <person name="Park S.-Y."/>
            <person name="Proctor R.H."/>
            <person name="Regev A."/>
            <person name="Ruiz-Roldan M.C."/>
            <person name="Sain D."/>
            <person name="Sakthikumar S."/>
            <person name="Sykes S."/>
            <person name="Schwartz D.C."/>
            <person name="Turgeon B.G."/>
            <person name="Wapinski I."/>
            <person name="Yoder O."/>
            <person name="Young S."/>
            <person name="Zeng Q."/>
            <person name="Zhou S."/>
            <person name="Galagan J."/>
            <person name="Cuomo C.A."/>
            <person name="Kistler H.C."/>
            <person name="Rep M."/>
        </authorList>
    </citation>
    <scope>GENOME REANNOTATION</scope>
    <source>
        <strain>ATCC MYA-4620 / CBS 123657 / FGSC 9075 / NRRL 31084 / PH-1</strain>
    </source>
</reference>
<reference key="3">
    <citation type="journal article" date="2015" name="BMC Genomics">
        <title>The completed genome sequence of the pathogenic ascomycete fungus Fusarium graminearum.</title>
        <authorList>
            <person name="King R."/>
            <person name="Urban M."/>
            <person name="Hammond-Kosack M.C.U."/>
            <person name="Hassani-Pak K."/>
            <person name="Hammond-Kosack K.E."/>
        </authorList>
    </citation>
    <scope>NUCLEOTIDE SEQUENCE [LARGE SCALE GENOMIC DNA]</scope>
    <source>
        <strain>ATCC MYA-4620 / CBS 123657 / FGSC 9075 / NRRL 31084 / PH-1</strain>
    </source>
</reference>
<reference key="4">
    <citation type="journal article" date="2018" name="J. Am. Chem. Soc.">
        <title>Gramillin A and B: cyclic lipopeptides identified as the nonribosomal biosynthetic products of Fusarium graminearum.</title>
        <authorList>
            <person name="Bahadoor A."/>
            <person name="Brauer E.K."/>
            <person name="Bosnich W."/>
            <person name="Schneiderman D."/>
            <person name="Johnston A."/>
            <person name="Aubin Y."/>
            <person name="Blackwell B."/>
            <person name="Melanson J.E."/>
            <person name="Harris L.J."/>
        </authorList>
    </citation>
    <scope>FUNCTION</scope>
    <scope>PATHWAY</scope>
</reference>